<dbReference type="EMBL" id="MT903340">
    <property type="protein sequence ID" value="QNP12975.1"/>
    <property type="molecule type" value="Genomic_DNA"/>
</dbReference>
<dbReference type="SMR" id="A0A7H0DN92"/>
<dbReference type="Proteomes" id="UP000516359">
    <property type="component" value="Genome"/>
</dbReference>
<dbReference type="GO" id="GO:0016020">
    <property type="term" value="C:membrane"/>
    <property type="evidence" value="ECO:0007669"/>
    <property type="project" value="UniProtKB-KW"/>
</dbReference>
<dbReference type="GO" id="GO:0055036">
    <property type="term" value="C:virion membrane"/>
    <property type="evidence" value="ECO:0007669"/>
    <property type="project" value="UniProtKB-SubCell"/>
</dbReference>
<dbReference type="GO" id="GO:0004089">
    <property type="term" value="F:carbonate dehydratase activity"/>
    <property type="evidence" value="ECO:0007669"/>
    <property type="project" value="InterPro"/>
</dbReference>
<dbReference type="GO" id="GO:0008270">
    <property type="term" value="F:zinc ion binding"/>
    <property type="evidence" value="ECO:0007669"/>
    <property type="project" value="InterPro"/>
</dbReference>
<dbReference type="Gene3D" id="3.10.200.10">
    <property type="entry name" value="Alpha carbonic anhydrase"/>
    <property type="match status" value="1"/>
</dbReference>
<dbReference type="InterPro" id="IPR001148">
    <property type="entry name" value="CA_dom"/>
</dbReference>
<dbReference type="InterPro" id="IPR036398">
    <property type="entry name" value="CA_dom_sf"/>
</dbReference>
<dbReference type="InterPro" id="IPR023561">
    <property type="entry name" value="Carbonic_anhydrase_a-class"/>
</dbReference>
<dbReference type="PANTHER" id="PTHR18952">
    <property type="entry name" value="CARBONIC ANHYDRASE"/>
    <property type="match status" value="1"/>
</dbReference>
<dbReference type="PANTHER" id="PTHR18952:SF124">
    <property type="entry name" value="CARBONIC ANHYDRASE 7"/>
    <property type="match status" value="1"/>
</dbReference>
<dbReference type="Pfam" id="PF00194">
    <property type="entry name" value="Carb_anhydrase"/>
    <property type="match status" value="1"/>
</dbReference>
<dbReference type="SMART" id="SM01057">
    <property type="entry name" value="Carb_anhydrase"/>
    <property type="match status" value="1"/>
</dbReference>
<dbReference type="SUPFAM" id="SSF51069">
    <property type="entry name" value="Carbonic anhydrase"/>
    <property type="match status" value="1"/>
</dbReference>
<dbReference type="PROSITE" id="PS51144">
    <property type="entry name" value="ALPHA_CA_2"/>
    <property type="match status" value="1"/>
</dbReference>
<accession>A0A7H0DN92</accession>
<feature type="chain" id="PRO_0000457425" description="Cell surface-binding protein OPG105">
    <location>
        <begin position="1"/>
        <end position="304"/>
    </location>
</feature>
<evidence type="ECO:0000250" key="1"/>
<evidence type="ECO:0000250" key="2">
    <source>
        <dbReference type="UniProtKB" id="P04195"/>
    </source>
</evidence>
<evidence type="ECO:0000305" key="3"/>
<organism>
    <name type="scientific">Monkeypox virus</name>
    <dbReference type="NCBI Taxonomy" id="10244"/>
    <lineage>
        <taxon>Viruses</taxon>
        <taxon>Varidnaviria</taxon>
        <taxon>Bamfordvirae</taxon>
        <taxon>Nucleocytoviricota</taxon>
        <taxon>Pokkesviricetes</taxon>
        <taxon>Chitovirales</taxon>
        <taxon>Poxviridae</taxon>
        <taxon>Chordopoxvirinae</taxon>
        <taxon>Orthopoxvirus</taxon>
    </lineage>
</organism>
<name>CAHH_MONPV</name>
<keyword id="KW-1015">Disulfide bond</keyword>
<keyword id="KW-0472">Membrane</keyword>
<keyword id="KW-1185">Reference proteome</keyword>
<keyword id="KW-0946">Virion</keyword>
<reference key="1">
    <citation type="journal article" date="2022" name="J. Infect. Dis.">
        <title>Exportation of Monkeypox virus from the African continent.</title>
        <authorList>
            <person name="Mauldin M.R."/>
            <person name="McCollum A.M."/>
            <person name="Nakazawa Y.J."/>
            <person name="Mandra A."/>
            <person name="Whitehouse E.R."/>
            <person name="Davidson W."/>
            <person name="Zhao H."/>
            <person name="Gao J."/>
            <person name="Li Y."/>
            <person name="Doty J."/>
            <person name="Yinka-Ogunleye A."/>
            <person name="Akinpelu A."/>
            <person name="Aruna O."/>
            <person name="Naidoo D."/>
            <person name="Lewandowski K."/>
            <person name="Afrough B."/>
            <person name="Graham V."/>
            <person name="Aarons E."/>
            <person name="Hewson R."/>
            <person name="Vipond R."/>
            <person name="Dunning J."/>
            <person name="Chand M."/>
            <person name="Brown C."/>
            <person name="Cohen-Gihon I."/>
            <person name="Erez N."/>
            <person name="Shifman O."/>
            <person name="Israeli O."/>
            <person name="Sharon M."/>
            <person name="Schwartz E."/>
            <person name="Beth-Din A."/>
            <person name="Zvi A."/>
            <person name="Mak T.M."/>
            <person name="Ng Y.K."/>
            <person name="Cui L."/>
            <person name="Lin R.T.P."/>
            <person name="Olson V.A."/>
            <person name="Brooks T."/>
            <person name="Paran N."/>
            <person name="Ihekweazu C."/>
            <person name="Reynolds M.G."/>
        </authorList>
    </citation>
    <scope>NUCLEOTIDE SEQUENCE [LARGE SCALE GENOMIC DNA]</scope>
    <source>
        <strain>MPXV-M5312_HM12_Rivers</strain>
    </source>
</reference>
<sequence length="304" mass="35248">MPQQLSPINIETKKAISDARLKTLDIHYNESKPTTIQNTGKLVRINFKGGYISGGFLPNEYVLSTIHIYWGKEDDYGSNHLIDVYKYSGEINLVHWNKKKYSSYEEAKKHDDGIIIIAIFLQVSDHKNVYFQKIVNQLDSIRSANMSAPFDSVFYLDNLLPSTLDYFTYLGTTINHSADAAWIIFPTPINIHSDQLSKFRTLLSSSNHEGKPHYITENYRNPYKLNDDTQVYYSGEIIRAATTSPVRENYFMKWLSDLREACFSYYQKYIEGNKTFAIIAIVFVFILTAILFLMSQRYSREKQN</sequence>
<comment type="function">
    <text evidence="1">Binds to chondroitin sulfate on the cell surface to provide virion attachment to target cell.</text>
</comment>
<comment type="subunit">
    <text evidence="2">Homodimer; disulfide-linked.</text>
</comment>
<comment type="subcellular location">
    <subcellularLocation>
        <location evidence="2">Virion membrane</location>
    </subcellularLocation>
    <text evidence="2">Component of the mature virion (MV) membrane.</text>
</comment>
<comment type="induction">
    <text>Expressed in the late phase of the viral replicative cycle.</text>
</comment>
<comment type="PTM">
    <text evidence="2">Apparently non-glycosylated.</text>
</comment>
<comment type="similarity">
    <text evidence="3">Belongs to the alpha-carbonic anhydrase family.</text>
</comment>
<proteinExistence type="evidence at transcript level"/>
<protein>
    <recommendedName>
        <fullName>Cell surface-binding protein OPG105</fullName>
    </recommendedName>
    <alternativeName>
        <fullName>Carbonic anhydrase homolog</fullName>
    </alternativeName>
</protein>
<organismHost>
    <name type="scientific">Cynomys gunnisoni</name>
    <name type="common">Gunnison's prairie dog</name>
    <name type="synonym">Spermophilus gunnisoni</name>
    <dbReference type="NCBI Taxonomy" id="45479"/>
</organismHost>
<organismHost>
    <name type="scientific">Cynomys leucurus</name>
    <name type="common">White-tailed prairie dog</name>
    <dbReference type="NCBI Taxonomy" id="99825"/>
</organismHost>
<organismHost>
    <name type="scientific">Cynomys ludovicianus</name>
    <name type="common">Black-tailed prairie dog</name>
    <dbReference type="NCBI Taxonomy" id="45480"/>
</organismHost>
<organismHost>
    <name type="scientific">Cynomys mexicanus</name>
    <name type="common">Mexican prairie dog</name>
    <dbReference type="NCBI Taxonomy" id="99826"/>
</organismHost>
<organismHost>
    <name type="scientific">Cynomys parvidens</name>
    <name type="common">Utah prairie dog</name>
    <dbReference type="NCBI Taxonomy" id="99827"/>
</organismHost>
<organismHost>
    <name type="scientific">Gliridae</name>
    <name type="common">dormice</name>
    <dbReference type="NCBI Taxonomy" id="30650"/>
</organismHost>
<organismHost>
    <name type="scientific">Heliosciurus ruwenzorii</name>
    <name type="common">Ruwenzori sun squirrel</name>
    <dbReference type="NCBI Taxonomy" id="226685"/>
</organismHost>
<organismHost>
    <name type="scientific">Homo sapiens</name>
    <name type="common">Human</name>
    <dbReference type="NCBI Taxonomy" id="9606"/>
</organismHost>
<organismHost>
    <name type="scientific">Mus musculus</name>
    <name type="common">Mouse</name>
    <dbReference type="NCBI Taxonomy" id="10090"/>
</organismHost>
<gene>
    <name type="primary">OPG105</name>
    <name type="ORF">MPXVgp105</name>
</gene>